<name>MRAZ_ECOL6</name>
<keyword id="KW-0963">Cytoplasm</keyword>
<keyword id="KW-0238">DNA-binding</keyword>
<keyword id="KW-1185">Reference proteome</keyword>
<keyword id="KW-0677">Repeat</keyword>
<keyword id="KW-0678">Repressor</keyword>
<keyword id="KW-0804">Transcription</keyword>
<keyword id="KW-0805">Transcription regulation</keyword>
<reference key="1">
    <citation type="journal article" date="2002" name="Proc. Natl. Acad. Sci. U.S.A.">
        <title>Extensive mosaic structure revealed by the complete genome sequence of uropathogenic Escherichia coli.</title>
        <authorList>
            <person name="Welch R.A."/>
            <person name="Burland V."/>
            <person name="Plunkett G. III"/>
            <person name="Redford P."/>
            <person name="Roesch P."/>
            <person name="Rasko D."/>
            <person name="Buckles E.L."/>
            <person name="Liou S.-R."/>
            <person name="Boutin A."/>
            <person name="Hackett J."/>
            <person name="Stroud D."/>
            <person name="Mayhew G.F."/>
            <person name="Rose D.J."/>
            <person name="Zhou S."/>
            <person name="Schwartz D.C."/>
            <person name="Perna N.T."/>
            <person name="Mobley H.L.T."/>
            <person name="Donnenberg M.S."/>
            <person name="Blattner F.R."/>
        </authorList>
    </citation>
    <scope>NUCLEOTIDE SEQUENCE [LARGE SCALE GENOMIC DNA]</scope>
    <source>
        <strain>CFT073 / ATCC 700928 / UPEC</strain>
    </source>
</reference>
<gene>
    <name evidence="1" type="primary">mraZ</name>
    <name type="ordered locus">c0099</name>
</gene>
<protein>
    <recommendedName>
        <fullName>Transcriptional regulator MraZ</fullName>
    </recommendedName>
</protein>
<dbReference type="EMBL" id="AE014075">
    <property type="protein sequence ID" value="AAN78597.1"/>
    <property type="status" value="ALT_INIT"/>
    <property type="molecule type" value="Genomic_DNA"/>
</dbReference>
<dbReference type="RefSeq" id="WP_001295770.1">
    <property type="nucleotide sequence ID" value="NZ_CP051263.1"/>
</dbReference>
<dbReference type="SMR" id="P65434"/>
<dbReference type="STRING" id="199310.c0099"/>
<dbReference type="GeneID" id="75202102"/>
<dbReference type="KEGG" id="ecc:c0099"/>
<dbReference type="eggNOG" id="COG2001">
    <property type="taxonomic scope" value="Bacteria"/>
</dbReference>
<dbReference type="HOGENOM" id="CLU_107907_2_0_6"/>
<dbReference type="Proteomes" id="UP000001410">
    <property type="component" value="Chromosome"/>
</dbReference>
<dbReference type="GO" id="GO:0005737">
    <property type="term" value="C:cytoplasm"/>
    <property type="evidence" value="ECO:0007669"/>
    <property type="project" value="UniProtKB-UniRule"/>
</dbReference>
<dbReference type="GO" id="GO:0009295">
    <property type="term" value="C:nucleoid"/>
    <property type="evidence" value="ECO:0007669"/>
    <property type="project" value="UniProtKB-SubCell"/>
</dbReference>
<dbReference type="GO" id="GO:0003700">
    <property type="term" value="F:DNA-binding transcription factor activity"/>
    <property type="evidence" value="ECO:0007669"/>
    <property type="project" value="UniProtKB-UniRule"/>
</dbReference>
<dbReference type="GO" id="GO:0000976">
    <property type="term" value="F:transcription cis-regulatory region binding"/>
    <property type="evidence" value="ECO:0007669"/>
    <property type="project" value="TreeGrafter"/>
</dbReference>
<dbReference type="GO" id="GO:2000143">
    <property type="term" value="P:negative regulation of DNA-templated transcription initiation"/>
    <property type="evidence" value="ECO:0007669"/>
    <property type="project" value="TreeGrafter"/>
</dbReference>
<dbReference type="CDD" id="cd16321">
    <property type="entry name" value="MraZ_C"/>
    <property type="match status" value="1"/>
</dbReference>
<dbReference type="CDD" id="cd16320">
    <property type="entry name" value="MraZ_N"/>
    <property type="match status" value="1"/>
</dbReference>
<dbReference type="FunFam" id="3.40.1550.20:FF:000001">
    <property type="entry name" value="Transcriptional regulator MraZ"/>
    <property type="match status" value="1"/>
</dbReference>
<dbReference type="Gene3D" id="3.40.1550.20">
    <property type="entry name" value="Transcriptional regulator MraZ domain"/>
    <property type="match status" value="1"/>
</dbReference>
<dbReference type="HAMAP" id="MF_01008">
    <property type="entry name" value="MraZ"/>
    <property type="match status" value="1"/>
</dbReference>
<dbReference type="InterPro" id="IPR003444">
    <property type="entry name" value="MraZ"/>
</dbReference>
<dbReference type="InterPro" id="IPR035644">
    <property type="entry name" value="MraZ_C"/>
</dbReference>
<dbReference type="InterPro" id="IPR020603">
    <property type="entry name" value="MraZ_dom"/>
</dbReference>
<dbReference type="InterPro" id="IPR035642">
    <property type="entry name" value="MraZ_N"/>
</dbReference>
<dbReference type="InterPro" id="IPR038619">
    <property type="entry name" value="MraZ_sf"/>
</dbReference>
<dbReference type="InterPro" id="IPR007159">
    <property type="entry name" value="SpoVT-AbrB_dom"/>
</dbReference>
<dbReference type="InterPro" id="IPR037914">
    <property type="entry name" value="SpoVT-AbrB_sf"/>
</dbReference>
<dbReference type="NCBIfam" id="TIGR00242">
    <property type="entry name" value="division/cell wall cluster transcriptional repressor MraZ"/>
    <property type="match status" value="1"/>
</dbReference>
<dbReference type="PANTHER" id="PTHR34701">
    <property type="entry name" value="TRANSCRIPTIONAL REGULATOR MRAZ"/>
    <property type="match status" value="1"/>
</dbReference>
<dbReference type="PANTHER" id="PTHR34701:SF1">
    <property type="entry name" value="TRANSCRIPTIONAL REGULATOR MRAZ"/>
    <property type="match status" value="1"/>
</dbReference>
<dbReference type="Pfam" id="PF02381">
    <property type="entry name" value="MraZ"/>
    <property type="match status" value="2"/>
</dbReference>
<dbReference type="SUPFAM" id="SSF89447">
    <property type="entry name" value="AbrB/MazE/MraZ-like"/>
    <property type="match status" value="1"/>
</dbReference>
<dbReference type="PROSITE" id="PS51740">
    <property type="entry name" value="SPOVT_ABRB"/>
    <property type="match status" value="2"/>
</dbReference>
<comment type="function">
    <text evidence="1">Negatively regulates its own expression and that of the subsequent genes in the proximal part of the division and cell wall (dcw) gene cluster. Acts by binding directly to DNA. May also regulate the expression of genes outside the dcw cluster.</text>
</comment>
<comment type="subunit">
    <text evidence="1">Forms oligomers.</text>
</comment>
<comment type="subcellular location">
    <subcellularLocation>
        <location evidence="1">Cytoplasm</location>
        <location evidence="1">Nucleoid</location>
    </subcellularLocation>
</comment>
<comment type="similarity">
    <text evidence="1">Belongs to the MraZ family.</text>
</comment>
<comment type="sequence caution" evidence="3">
    <conflict type="erroneous initiation">
        <sequence resource="EMBL-CDS" id="AAN78597"/>
    </conflict>
</comment>
<proteinExistence type="inferred from homology"/>
<sequence>MFRGATLVNLDSKGRLSVPTRYREQLLENAAGQMVCTIDIHHPCLLLYPLPEWEIIEQKLSRLSSMNPVERRVQRLLLGHASECQMDGAGRLLIAPVLRQHAGLTKEVMLVGQFNKFELWDETTWHQQVKEDIDAEQLATGDLSERLQDLSL</sequence>
<evidence type="ECO:0000255" key="1">
    <source>
        <dbReference type="HAMAP-Rule" id="MF_01008"/>
    </source>
</evidence>
<evidence type="ECO:0000255" key="2">
    <source>
        <dbReference type="PROSITE-ProRule" id="PRU01076"/>
    </source>
</evidence>
<evidence type="ECO:0000305" key="3"/>
<feature type="chain" id="PRO_0000108480" description="Transcriptional regulator MraZ">
    <location>
        <begin position="1"/>
        <end position="152"/>
    </location>
</feature>
<feature type="domain" description="SpoVT-AbrB 1" evidence="2">
    <location>
        <begin position="5"/>
        <end position="52"/>
    </location>
</feature>
<feature type="domain" description="SpoVT-AbrB 2" evidence="2">
    <location>
        <begin position="81"/>
        <end position="124"/>
    </location>
</feature>
<organism>
    <name type="scientific">Escherichia coli O6:H1 (strain CFT073 / ATCC 700928 / UPEC)</name>
    <dbReference type="NCBI Taxonomy" id="199310"/>
    <lineage>
        <taxon>Bacteria</taxon>
        <taxon>Pseudomonadati</taxon>
        <taxon>Pseudomonadota</taxon>
        <taxon>Gammaproteobacteria</taxon>
        <taxon>Enterobacterales</taxon>
        <taxon>Enterobacteriaceae</taxon>
        <taxon>Escherichia</taxon>
    </lineage>
</organism>
<accession>P65434</accession>
<accession>Q8X9Z3</accession>